<organism>
    <name type="scientific">Excalfactoria chinensis</name>
    <name type="common">Blue-breasted quail</name>
    <name type="synonym">Coturnix chinensis</name>
    <dbReference type="NCBI Taxonomy" id="46218"/>
    <lineage>
        <taxon>Eukaryota</taxon>
        <taxon>Metazoa</taxon>
        <taxon>Chordata</taxon>
        <taxon>Craniata</taxon>
        <taxon>Vertebrata</taxon>
        <taxon>Euteleostomi</taxon>
        <taxon>Archelosauria</taxon>
        <taxon>Archosauria</taxon>
        <taxon>Dinosauria</taxon>
        <taxon>Saurischia</taxon>
        <taxon>Theropoda</taxon>
        <taxon>Coelurosauria</taxon>
        <taxon>Aves</taxon>
        <taxon>Neognathae</taxon>
        <taxon>Galloanserae</taxon>
        <taxon>Galliformes</taxon>
        <taxon>Phasianidae</taxon>
        <taxon>Excalfactoria</taxon>
    </lineage>
</organism>
<feature type="signal peptide" evidence="3">
    <location>
        <begin position="1"/>
        <end position="23"/>
    </location>
</feature>
<feature type="propeptide" id="PRO_0000247004" evidence="3">
    <location>
        <begin position="24"/>
        <end position="266"/>
    </location>
</feature>
<feature type="chain" id="PRO_0000247005" description="Growth/differentiation factor 8">
    <location>
        <begin position="267"/>
        <end position="375"/>
    </location>
</feature>
<feature type="glycosylation site" description="N-linked (GlcNAc...) asparagine" evidence="3">
    <location>
        <position position="71"/>
    </location>
</feature>
<feature type="disulfide bond" evidence="2">
    <location>
        <begin position="272"/>
        <end position="282"/>
    </location>
</feature>
<feature type="disulfide bond" evidence="1">
    <location>
        <begin position="281"/>
        <end position="340"/>
    </location>
</feature>
<feature type="disulfide bond" evidence="1">
    <location>
        <begin position="309"/>
        <end position="372"/>
    </location>
</feature>
<feature type="disulfide bond" evidence="1">
    <location>
        <begin position="313"/>
        <end position="374"/>
    </location>
</feature>
<feature type="disulfide bond" description="Interchain" evidence="1">
    <location>
        <position position="339"/>
    </location>
</feature>
<accession>Q8UWD7</accession>
<name>GDF8_EXCCH</name>
<evidence type="ECO:0000250" key="1"/>
<evidence type="ECO:0000250" key="2">
    <source>
        <dbReference type="UniProtKB" id="O08689"/>
    </source>
</evidence>
<evidence type="ECO:0000255" key="3"/>
<evidence type="ECO:0000305" key="4"/>
<sequence>MQKLAVYVYIYLFVQISVDPVALDGSSQPTENTEKDGLCNACTWRQNTKSSRIEAIKIQILSKLRLEQAPNISRDVIKQLLPKAPPLQELIDQYDVQRDDSSDGSLEDDDYHATTETIITMPTESDFLVQMEGKPKCCFFKFSSKIQYNKVVKAQLWIYLRQVQKPTTVFVQILRLIKPMKDGTRYTGIRSLKLDMNPGNGIWQSIDVKTVLQNWLKQPESNLGIEIKAFDENGRDLAVTFPGPGEDGSNPFLEVRVTDTPKRSRRDFGLDCDEHSTESRCCRYPLTVDFEAFGWDWIIAPKRYKANYCSGECEFVFLQKYPHTHLVHQANPRGSAGPCCTPTKMSPINMLYFNGKEQIIYGKIPAMVVDRCGCS</sequence>
<dbReference type="EMBL" id="AF440864">
    <property type="protein sequence ID" value="AAL35278.1"/>
    <property type="molecule type" value="mRNA"/>
</dbReference>
<dbReference type="SMR" id="Q8UWD7"/>
<dbReference type="GlyCosmos" id="Q8UWD7">
    <property type="glycosylation" value="1 site, No reported glycans"/>
</dbReference>
<dbReference type="GO" id="GO:0005615">
    <property type="term" value="C:extracellular space"/>
    <property type="evidence" value="ECO:0000250"/>
    <property type="project" value="AgBase"/>
</dbReference>
<dbReference type="GO" id="GO:0005125">
    <property type="term" value="F:cytokine activity"/>
    <property type="evidence" value="ECO:0007669"/>
    <property type="project" value="UniProtKB-KW"/>
</dbReference>
<dbReference type="GO" id="GO:0008083">
    <property type="term" value="F:growth factor activity"/>
    <property type="evidence" value="ECO:0007669"/>
    <property type="project" value="UniProtKB-KW"/>
</dbReference>
<dbReference type="GO" id="GO:0033002">
    <property type="term" value="P:muscle cell proliferation"/>
    <property type="evidence" value="ECO:0000250"/>
    <property type="project" value="AgBase"/>
</dbReference>
<dbReference type="GO" id="GO:2000818">
    <property type="term" value="P:negative regulation of myoblast proliferation"/>
    <property type="evidence" value="ECO:0000250"/>
    <property type="project" value="AgBase"/>
</dbReference>
<dbReference type="GO" id="GO:1902725">
    <property type="term" value="P:negative regulation of satellite cell differentiation"/>
    <property type="evidence" value="ECO:0000250"/>
    <property type="project" value="AgBase"/>
</dbReference>
<dbReference type="GO" id="GO:1902723">
    <property type="term" value="P:negative regulation of skeletal muscle satellite cell proliferation"/>
    <property type="evidence" value="ECO:0000250"/>
    <property type="project" value="AgBase"/>
</dbReference>
<dbReference type="CDD" id="cd19388">
    <property type="entry name" value="TGF_beta_GDF8"/>
    <property type="match status" value="1"/>
</dbReference>
<dbReference type="FunFam" id="2.60.120.970:FF:000001">
    <property type="entry name" value="Growth/differentiation factor 8"/>
    <property type="match status" value="1"/>
</dbReference>
<dbReference type="FunFam" id="2.10.90.10:FF:000006">
    <property type="entry name" value="growth/differentiation factor 8"/>
    <property type="match status" value="1"/>
</dbReference>
<dbReference type="Gene3D" id="2.60.120.970">
    <property type="match status" value="1"/>
</dbReference>
<dbReference type="Gene3D" id="2.10.90.10">
    <property type="entry name" value="Cystine-knot cytokines"/>
    <property type="match status" value="1"/>
</dbReference>
<dbReference type="InterPro" id="IPR029034">
    <property type="entry name" value="Cystine-knot_cytokine"/>
</dbReference>
<dbReference type="InterPro" id="IPR001839">
    <property type="entry name" value="TGF-b_C"/>
</dbReference>
<dbReference type="InterPro" id="IPR001111">
    <property type="entry name" value="TGF-b_propeptide"/>
</dbReference>
<dbReference type="InterPro" id="IPR015615">
    <property type="entry name" value="TGF-beta-rel"/>
</dbReference>
<dbReference type="InterPro" id="IPR017948">
    <property type="entry name" value="TGFb_CS"/>
</dbReference>
<dbReference type="PANTHER" id="PTHR11848:SF150">
    <property type="entry name" value="GROWTH_DIFFERENTIATION FACTOR 8"/>
    <property type="match status" value="1"/>
</dbReference>
<dbReference type="PANTHER" id="PTHR11848">
    <property type="entry name" value="TGF-BETA FAMILY"/>
    <property type="match status" value="1"/>
</dbReference>
<dbReference type="Pfam" id="PF00019">
    <property type="entry name" value="TGF_beta"/>
    <property type="match status" value="1"/>
</dbReference>
<dbReference type="Pfam" id="PF00688">
    <property type="entry name" value="TGFb_propeptide"/>
    <property type="match status" value="1"/>
</dbReference>
<dbReference type="SMART" id="SM00204">
    <property type="entry name" value="TGFB"/>
    <property type="match status" value="1"/>
</dbReference>
<dbReference type="SUPFAM" id="SSF57501">
    <property type="entry name" value="Cystine-knot cytokines"/>
    <property type="match status" value="1"/>
</dbReference>
<dbReference type="PROSITE" id="PS00250">
    <property type="entry name" value="TGF_BETA_1"/>
    <property type="match status" value="1"/>
</dbReference>
<dbReference type="PROSITE" id="PS51362">
    <property type="entry name" value="TGF_BETA_2"/>
    <property type="match status" value="1"/>
</dbReference>
<reference key="1">
    <citation type="submission" date="2001-10" db="EMBL/GenBank/DDBJ databases">
        <title>Molecular cloning and tissue distribution of the myostatin gene in duck, goose, pigeon and quail.</title>
        <authorList>
            <person name="Gu Z."/>
            <person name="Yang W."/>
            <person name="Cheng Z."/>
            <person name="Li H."/>
            <person name="Zhu D."/>
        </authorList>
    </citation>
    <scope>NUCLEOTIDE SEQUENCE [MRNA]</scope>
</reference>
<gene>
    <name type="primary">MSTN</name>
    <name type="synonym">GDF8</name>
</gene>
<proteinExistence type="evidence at transcript level"/>
<keyword id="KW-0165">Cleavage on pair of basic residues</keyword>
<keyword id="KW-0202">Cytokine</keyword>
<keyword id="KW-1015">Disulfide bond</keyword>
<keyword id="KW-0325">Glycoprotein</keyword>
<keyword id="KW-0339">Growth factor</keyword>
<keyword id="KW-0964">Secreted</keyword>
<keyword id="KW-0732">Signal</keyword>
<comment type="function">
    <text evidence="1">Acts specifically as a negative regulator of skeletal muscle growth.</text>
</comment>
<comment type="subunit">
    <text evidence="1">Homodimer; disulfide-linked.</text>
</comment>
<comment type="subcellular location">
    <subcellularLocation>
        <location evidence="1">Secreted</location>
    </subcellularLocation>
</comment>
<comment type="similarity">
    <text evidence="4">Belongs to the TGF-beta family.</text>
</comment>
<protein>
    <recommendedName>
        <fullName>Growth/differentiation factor 8</fullName>
        <shortName>GDF-8</shortName>
    </recommendedName>
    <alternativeName>
        <fullName>Myostatin</fullName>
    </alternativeName>
</protein>